<gene>
    <name evidence="1" type="primary">ispE</name>
    <name type="ordered locus">CCA_00815</name>
</gene>
<feature type="chain" id="PRO_0000189202" description="4-diphosphocytidyl-2-C-methyl-D-erythritol kinase">
    <location>
        <begin position="1"/>
        <end position="291"/>
    </location>
</feature>
<feature type="active site" evidence="1">
    <location>
        <position position="8"/>
    </location>
</feature>
<feature type="active site" evidence="1">
    <location>
        <position position="131"/>
    </location>
</feature>
<feature type="binding site" evidence="1">
    <location>
        <begin position="89"/>
        <end position="99"/>
    </location>
    <ligand>
        <name>ATP</name>
        <dbReference type="ChEBI" id="CHEBI:30616"/>
    </ligand>
</feature>
<reference key="1">
    <citation type="journal article" date="2003" name="Nucleic Acids Res.">
        <title>Genome sequence of Chlamydophila caviae (Chlamydia psittaci GPIC): examining the role of niche-specific genes in the evolution of the Chlamydiaceae.</title>
        <authorList>
            <person name="Read T.D."/>
            <person name="Myers G.S.A."/>
            <person name="Brunham R.C."/>
            <person name="Nelson W.C."/>
            <person name="Paulsen I.T."/>
            <person name="Heidelberg J.F."/>
            <person name="Holtzapple E.K."/>
            <person name="Khouri H.M."/>
            <person name="Federova N.B."/>
            <person name="Carty H.A."/>
            <person name="Umayam L.A."/>
            <person name="Haft D.H."/>
            <person name="Peterson J.D."/>
            <person name="Beanan M.J."/>
            <person name="White O."/>
            <person name="Salzberg S.L."/>
            <person name="Hsia R.-C."/>
            <person name="McClarty G."/>
            <person name="Rank R.G."/>
            <person name="Bavoil P.M."/>
            <person name="Fraser C.M."/>
        </authorList>
    </citation>
    <scope>NUCLEOTIDE SEQUENCE [LARGE SCALE GENOMIC DNA]</scope>
    <source>
        <strain>ATCC VR-813 / DSM 19441 / 03DC25 / GPIC</strain>
    </source>
</reference>
<name>ISPE_CHLCV</name>
<proteinExistence type="inferred from homology"/>
<comment type="function">
    <text evidence="1">Catalyzes the phosphorylation of the position 2 hydroxy group of 4-diphosphocytidyl-2C-methyl-D-erythritol.</text>
</comment>
<comment type="catalytic activity">
    <reaction evidence="1">
        <text>4-CDP-2-C-methyl-D-erythritol + ATP = 4-CDP-2-C-methyl-D-erythritol 2-phosphate + ADP + H(+)</text>
        <dbReference type="Rhea" id="RHEA:18437"/>
        <dbReference type="ChEBI" id="CHEBI:15378"/>
        <dbReference type="ChEBI" id="CHEBI:30616"/>
        <dbReference type="ChEBI" id="CHEBI:57823"/>
        <dbReference type="ChEBI" id="CHEBI:57919"/>
        <dbReference type="ChEBI" id="CHEBI:456216"/>
        <dbReference type="EC" id="2.7.1.148"/>
    </reaction>
</comment>
<comment type="pathway">
    <text evidence="1">Isoprenoid biosynthesis; isopentenyl diphosphate biosynthesis via DXP pathway; isopentenyl diphosphate from 1-deoxy-D-xylulose 5-phosphate: step 3/6.</text>
</comment>
<comment type="similarity">
    <text evidence="1">Belongs to the GHMP kinase family. IspE subfamily.</text>
</comment>
<dbReference type="EC" id="2.7.1.148" evidence="1"/>
<dbReference type="EMBL" id="AE015925">
    <property type="protein sequence ID" value="AAP05556.1"/>
    <property type="molecule type" value="Genomic_DNA"/>
</dbReference>
<dbReference type="RefSeq" id="WP_011006770.1">
    <property type="nucleotide sequence ID" value="NC_003361.3"/>
</dbReference>
<dbReference type="SMR" id="Q821X0"/>
<dbReference type="STRING" id="227941.CCA_00815"/>
<dbReference type="KEGG" id="cca:CCA_00815"/>
<dbReference type="eggNOG" id="COG1947">
    <property type="taxonomic scope" value="Bacteria"/>
</dbReference>
<dbReference type="HOGENOM" id="CLU_053057_3_0_0"/>
<dbReference type="OrthoDB" id="9809438at2"/>
<dbReference type="UniPathway" id="UPA00056">
    <property type="reaction ID" value="UER00094"/>
</dbReference>
<dbReference type="Proteomes" id="UP000002193">
    <property type="component" value="Chromosome"/>
</dbReference>
<dbReference type="GO" id="GO:0050515">
    <property type="term" value="F:4-(cytidine 5'-diphospho)-2-C-methyl-D-erythritol kinase activity"/>
    <property type="evidence" value="ECO:0007669"/>
    <property type="project" value="UniProtKB-UniRule"/>
</dbReference>
<dbReference type="GO" id="GO:0005524">
    <property type="term" value="F:ATP binding"/>
    <property type="evidence" value="ECO:0007669"/>
    <property type="project" value="UniProtKB-UniRule"/>
</dbReference>
<dbReference type="GO" id="GO:0019288">
    <property type="term" value="P:isopentenyl diphosphate biosynthetic process, methylerythritol 4-phosphate pathway"/>
    <property type="evidence" value="ECO:0007669"/>
    <property type="project" value="UniProtKB-UniRule"/>
</dbReference>
<dbReference type="GO" id="GO:0016114">
    <property type="term" value="P:terpenoid biosynthetic process"/>
    <property type="evidence" value="ECO:0007669"/>
    <property type="project" value="InterPro"/>
</dbReference>
<dbReference type="Gene3D" id="3.30.230.10">
    <property type="match status" value="1"/>
</dbReference>
<dbReference type="Gene3D" id="3.30.70.890">
    <property type="entry name" value="GHMP kinase, C-terminal domain"/>
    <property type="match status" value="1"/>
</dbReference>
<dbReference type="HAMAP" id="MF_00061">
    <property type="entry name" value="IspE"/>
    <property type="match status" value="1"/>
</dbReference>
<dbReference type="InterPro" id="IPR036554">
    <property type="entry name" value="GHMP_kinase_C_sf"/>
</dbReference>
<dbReference type="InterPro" id="IPR006204">
    <property type="entry name" value="GHMP_kinase_N_dom"/>
</dbReference>
<dbReference type="InterPro" id="IPR004424">
    <property type="entry name" value="IspE"/>
</dbReference>
<dbReference type="InterPro" id="IPR020568">
    <property type="entry name" value="Ribosomal_Su5_D2-typ_SF"/>
</dbReference>
<dbReference type="InterPro" id="IPR014721">
    <property type="entry name" value="Ribsml_uS5_D2-typ_fold_subgr"/>
</dbReference>
<dbReference type="NCBIfam" id="TIGR00154">
    <property type="entry name" value="ispE"/>
    <property type="match status" value="1"/>
</dbReference>
<dbReference type="PANTHER" id="PTHR43527">
    <property type="entry name" value="4-DIPHOSPHOCYTIDYL-2-C-METHYL-D-ERYTHRITOL KINASE, CHLOROPLASTIC"/>
    <property type="match status" value="1"/>
</dbReference>
<dbReference type="PANTHER" id="PTHR43527:SF2">
    <property type="entry name" value="4-DIPHOSPHOCYTIDYL-2-C-METHYL-D-ERYTHRITOL KINASE, CHLOROPLASTIC"/>
    <property type="match status" value="1"/>
</dbReference>
<dbReference type="Pfam" id="PF00288">
    <property type="entry name" value="GHMP_kinases_N"/>
    <property type="match status" value="1"/>
</dbReference>
<dbReference type="PIRSF" id="PIRSF010376">
    <property type="entry name" value="IspE"/>
    <property type="match status" value="1"/>
</dbReference>
<dbReference type="SUPFAM" id="SSF55060">
    <property type="entry name" value="GHMP Kinase, C-terminal domain"/>
    <property type="match status" value="1"/>
</dbReference>
<dbReference type="SUPFAM" id="SSF54211">
    <property type="entry name" value="Ribosomal protein S5 domain 2-like"/>
    <property type="match status" value="1"/>
</dbReference>
<evidence type="ECO:0000255" key="1">
    <source>
        <dbReference type="HAMAP-Rule" id="MF_00061"/>
    </source>
</evidence>
<keyword id="KW-0067">ATP-binding</keyword>
<keyword id="KW-0414">Isoprene biosynthesis</keyword>
<keyword id="KW-0418">Kinase</keyword>
<keyword id="KW-0547">Nucleotide-binding</keyword>
<keyword id="KW-0808">Transferase</keyword>
<protein>
    <recommendedName>
        <fullName evidence="1">4-diphosphocytidyl-2-C-methyl-D-erythritol kinase</fullName>
        <shortName evidence="1">CMK</shortName>
        <ecNumber evidence="1">2.7.1.148</ecNumber>
    </recommendedName>
    <alternativeName>
        <fullName evidence="1">4-(cytidine-5'-diphospho)-2-C-methyl-D-erythritol kinase</fullName>
    </alternativeName>
</protein>
<accession>Q821X0</accession>
<organism>
    <name type="scientific">Chlamydia caviae (strain ATCC VR-813 / DSM 19441 / 03DC25 / GPIC)</name>
    <name type="common">Chlamydophila caviae</name>
    <dbReference type="NCBI Taxonomy" id="227941"/>
    <lineage>
        <taxon>Bacteria</taxon>
        <taxon>Pseudomonadati</taxon>
        <taxon>Chlamydiota</taxon>
        <taxon>Chlamydiia</taxon>
        <taxon>Chlamydiales</taxon>
        <taxon>Chlamydiaceae</taxon>
        <taxon>Chlamydia/Chlamydophila group</taxon>
        <taxon>Chlamydia</taxon>
    </lineage>
</organism>
<sequence length="291" mass="32979">MDFFSPAKLNLFLKLHGKTSRGFHEMTTQYQVIDFGDTLCLERSNEDTLICNLPELSTPQNLVWKSLQIFRDYTQVNDPVAWRLHKRIPIGAGVGGGSSNAATALYALNEHFQTQLSNDELQELGKKIGMDVPLFFSSGSAIGVGCGEEILPYEDYNCEERYVLYFSDQGVLTKDAFSYVHPEDFSHRKDAIALYERDNDLEKSVFRFRKDLEEKKQMLKRMWSPFHAHVGMSGAGATLFVSYPREMETDPSVAKAIHTTIQDSHGLLVNSLRKQSSGWFLNSDNLFTAAR</sequence>